<evidence type="ECO:0000255" key="1">
    <source>
        <dbReference type="PROSITE-ProRule" id="PRU00114"/>
    </source>
</evidence>
<organism>
    <name type="scientific">Mus musculus</name>
    <name type="common">Mouse</name>
    <dbReference type="NCBI Taxonomy" id="10090"/>
    <lineage>
        <taxon>Eukaryota</taxon>
        <taxon>Metazoa</taxon>
        <taxon>Chordata</taxon>
        <taxon>Craniata</taxon>
        <taxon>Vertebrata</taxon>
        <taxon>Euteleostomi</taxon>
        <taxon>Mammalia</taxon>
        <taxon>Eutheria</taxon>
        <taxon>Euarchontoglires</taxon>
        <taxon>Glires</taxon>
        <taxon>Rodentia</taxon>
        <taxon>Myomorpha</taxon>
        <taxon>Muroidea</taxon>
        <taxon>Muridae</taxon>
        <taxon>Murinae</taxon>
        <taxon>Mus</taxon>
        <taxon>Mus</taxon>
    </lineage>
</organism>
<keyword id="KW-1064">Adaptive immunity</keyword>
<keyword id="KW-0903">Direct protein sequencing</keyword>
<keyword id="KW-1015">Disulfide bond</keyword>
<keyword id="KW-0391">Immunity</keyword>
<keyword id="KW-1280">Immunoglobulin</keyword>
<keyword id="KW-1185">Reference proteome</keyword>
<sequence length="113" mass="12671">EVKLEESGGGLVQPGGSMKLSCVASGFTFSNYWMNWVRQSPEKGLEWVAEIRLKSHNYATHYAESVKGRFTISRDDSKSSVYLQMNNLRAEDTGIYYCTTGFAYWGQGTLVPV</sequence>
<comment type="miscellaneous">
    <text>This chain was isolated from a myeloma protein that binds inulin.</text>
</comment>
<protein>
    <recommendedName>
        <fullName>Ig heavy chain V-III region U61</fullName>
    </recommendedName>
</protein>
<accession>P01797</accession>
<name>HVM28_MOUSE</name>
<proteinExistence type="evidence at protein level"/>
<reference key="1">
    <citation type="journal article" date="1978" name="Proc. Natl. Acad. Sci. U.S.A.">
        <title>Sequence variation among heavy chains from inulin-binding myeloma proteins.</title>
        <authorList>
            <person name="Vrana M."/>
            <person name="Rudikoff S."/>
            <person name="Potter M."/>
        </authorList>
    </citation>
    <scope>PROTEIN SEQUENCE</scope>
</reference>
<dbReference type="PIR" id="B93818">
    <property type="entry name" value="AVMS61"/>
</dbReference>
<dbReference type="SMR" id="P01797"/>
<dbReference type="FunCoup" id="P01797">
    <property type="interactions" value="529"/>
</dbReference>
<dbReference type="InParanoid" id="P01797"/>
<dbReference type="Proteomes" id="UP000000589">
    <property type="component" value="Unplaced"/>
</dbReference>
<dbReference type="RNAct" id="P01797">
    <property type="molecule type" value="protein"/>
</dbReference>
<dbReference type="GO" id="GO:0005576">
    <property type="term" value="C:extracellular region"/>
    <property type="evidence" value="ECO:0007669"/>
    <property type="project" value="UniProtKB-ARBA"/>
</dbReference>
<dbReference type="GO" id="GO:0019814">
    <property type="term" value="C:immunoglobulin complex"/>
    <property type="evidence" value="ECO:0007669"/>
    <property type="project" value="UniProtKB-KW"/>
</dbReference>
<dbReference type="GO" id="GO:0003823">
    <property type="term" value="F:antigen binding"/>
    <property type="evidence" value="ECO:0000318"/>
    <property type="project" value="GO_Central"/>
</dbReference>
<dbReference type="GO" id="GO:0016064">
    <property type="term" value="P:immunoglobulin mediated immune response"/>
    <property type="evidence" value="ECO:0000318"/>
    <property type="project" value="GO_Central"/>
</dbReference>
<dbReference type="CDD" id="cd04981">
    <property type="entry name" value="IgV_H"/>
    <property type="match status" value="1"/>
</dbReference>
<dbReference type="FunFam" id="2.60.40.10:FF:001372">
    <property type="entry name" value="Ig heavy chain V region M603"/>
    <property type="match status" value="1"/>
</dbReference>
<dbReference type="Gene3D" id="2.60.40.10">
    <property type="entry name" value="Immunoglobulins"/>
    <property type="match status" value="1"/>
</dbReference>
<dbReference type="InterPro" id="IPR007110">
    <property type="entry name" value="Ig-like_dom"/>
</dbReference>
<dbReference type="InterPro" id="IPR036179">
    <property type="entry name" value="Ig-like_dom_sf"/>
</dbReference>
<dbReference type="InterPro" id="IPR013783">
    <property type="entry name" value="Ig-like_fold"/>
</dbReference>
<dbReference type="InterPro" id="IPR003599">
    <property type="entry name" value="Ig_sub"/>
</dbReference>
<dbReference type="InterPro" id="IPR013106">
    <property type="entry name" value="Ig_V-set"/>
</dbReference>
<dbReference type="InterPro" id="IPR050199">
    <property type="entry name" value="IgHV"/>
</dbReference>
<dbReference type="PANTHER" id="PTHR23266">
    <property type="entry name" value="IMMUNOGLOBULIN HEAVY CHAIN"/>
    <property type="match status" value="1"/>
</dbReference>
<dbReference type="Pfam" id="PF07686">
    <property type="entry name" value="V-set"/>
    <property type="match status" value="1"/>
</dbReference>
<dbReference type="SMART" id="SM00409">
    <property type="entry name" value="IG"/>
    <property type="match status" value="1"/>
</dbReference>
<dbReference type="SMART" id="SM00406">
    <property type="entry name" value="IGv"/>
    <property type="match status" value="1"/>
</dbReference>
<dbReference type="SUPFAM" id="SSF48726">
    <property type="entry name" value="Immunoglobulin"/>
    <property type="match status" value="1"/>
</dbReference>
<dbReference type="PROSITE" id="PS50835">
    <property type="entry name" value="IG_LIKE"/>
    <property type="match status" value="1"/>
</dbReference>
<feature type="chain" id="PRO_0000059882" description="Ig heavy chain V-III region U61">
    <location>
        <begin position="1"/>
        <end position="113" status="greater than"/>
    </location>
</feature>
<feature type="domain" description="Ig-like">
    <location>
        <begin position="1"/>
        <end position="113" status="greater than"/>
    </location>
</feature>
<feature type="disulfide bond" evidence="1">
    <location>
        <begin position="22"/>
        <end position="98"/>
    </location>
</feature>
<feature type="non-terminal residue">
    <location>
        <position position="113"/>
    </location>
</feature>